<protein>
    <recommendedName>
        <fullName evidence="1">DNA ligase</fullName>
        <ecNumber evidence="1">6.5.1.2</ecNumber>
    </recommendedName>
    <alternativeName>
        <fullName evidence="1">Polydeoxyribonucleotide synthase [NAD(+)]</fullName>
    </alternativeName>
</protein>
<proteinExistence type="inferred from homology"/>
<feature type="chain" id="PRO_0000340360" description="DNA ligase">
    <location>
        <begin position="1"/>
        <end position="712"/>
    </location>
</feature>
<feature type="domain" description="BRCT" evidence="1">
    <location>
        <begin position="622"/>
        <end position="711"/>
    </location>
</feature>
<feature type="active site" description="N6-AMP-lysine intermediate" evidence="1">
    <location>
        <position position="135"/>
    </location>
</feature>
<feature type="binding site" evidence="1">
    <location>
        <begin position="53"/>
        <end position="57"/>
    </location>
    <ligand>
        <name>NAD(+)</name>
        <dbReference type="ChEBI" id="CHEBI:57540"/>
    </ligand>
</feature>
<feature type="binding site" evidence="1">
    <location>
        <begin position="103"/>
        <end position="104"/>
    </location>
    <ligand>
        <name>NAD(+)</name>
        <dbReference type="ChEBI" id="CHEBI:57540"/>
    </ligand>
</feature>
<feature type="binding site" evidence="1">
    <location>
        <position position="133"/>
    </location>
    <ligand>
        <name>NAD(+)</name>
        <dbReference type="ChEBI" id="CHEBI:57540"/>
    </ligand>
</feature>
<feature type="binding site" evidence="1">
    <location>
        <position position="156"/>
    </location>
    <ligand>
        <name>NAD(+)</name>
        <dbReference type="ChEBI" id="CHEBI:57540"/>
    </ligand>
</feature>
<feature type="binding site" evidence="1">
    <location>
        <position position="196"/>
    </location>
    <ligand>
        <name>NAD(+)</name>
        <dbReference type="ChEBI" id="CHEBI:57540"/>
    </ligand>
</feature>
<feature type="binding site" evidence="1">
    <location>
        <position position="315"/>
    </location>
    <ligand>
        <name>NAD(+)</name>
        <dbReference type="ChEBI" id="CHEBI:57540"/>
    </ligand>
</feature>
<feature type="binding site" evidence="1">
    <location>
        <position position="339"/>
    </location>
    <ligand>
        <name>NAD(+)</name>
        <dbReference type="ChEBI" id="CHEBI:57540"/>
    </ligand>
</feature>
<feature type="binding site" evidence="1">
    <location>
        <position position="433"/>
    </location>
    <ligand>
        <name>Zn(2+)</name>
        <dbReference type="ChEBI" id="CHEBI:29105"/>
    </ligand>
</feature>
<feature type="binding site" evidence="1">
    <location>
        <position position="436"/>
    </location>
    <ligand>
        <name>Zn(2+)</name>
        <dbReference type="ChEBI" id="CHEBI:29105"/>
    </ligand>
</feature>
<feature type="binding site" evidence="1">
    <location>
        <position position="452"/>
    </location>
    <ligand>
        <name>Zn(2+)</name>
        <dbReference type="ChEBI" id="CHEBI:29105"/>
    </ligand>
</feature>
<feature type="binding site" evidence="1">
    <location>
        <position position="458"/>
    </location>
    <ligand>
        <name>Zn(2+)</name>
        <dbReference type="ChEBI" id="CHEBI:29105"/>
    </ligand>
</feature>
<accession>A4TDZ8</accession>
<reference key="1">
    <citation type="submission" date="2007-04" db="EMBL/GenBank/DDBJ databases">
        <title>Complete sequence of chromosome of Mycobacterium gilvum PYR-GCK.</title>
        <authorList>
            <consortium name="US DOE Joint Genome Institute"/>
            <person name="Copeland A."/>
            <person name="Lucas S."/>
            <person name="Lapidus A."/>
            <person name="Barry K."/>
            <person name="Detter J.C."/>
            <person name="Glavina del Rio T."/>
            <person name="Hammon N."/>
            <person name="Israni S."/>
            <person name="Dalin E."/>
            <person name="Tice H."/>
            <person name="Pitluck S."/>
            <person name="Chain P."/>
            <person name="Malfatti S."/>
            <person name="Shin M."/>
            <person name="Vergez L."/>
            <person name="Schmutz J."/>
            <person name="Larimer F."/>
            <person name="Land M."/>
            <person name="Hauser L."/>
            <person name="Kyrpides N."/>
            <person name="Mikhailova N."/>
            <person name="Miller C."/>
            <person name="Richardson P."/>
        </authorList>
    </citation>
    <scope>NUCLEOTIDE SEQUENCE [LARGE SCALE GENOMIC DNA]</scope>
    <source>
        <strain>PYR-GCK</strain>
    </source>
</reference>
<evidence type="ECO:0000255" key="1">
    <source>
        <dbReference type="HAMAP-Rule" id="MF_01588"/>
    </source>
</evidence>
<sequence>MSPEAIPDPESMLAEQAHDALDPDLRRSWQELADEVREHQFRYYIRDAPIITDAEFDQLLRRLQALEDEYPELRTPDSPTQLVGGAGFATDFTAAEHLERMLSLDNVFDLEELAAWAARIRTEIGADAQYLCELKIDGVALALVYRDGRLERAATRGDGRTGEDVTLNARTIEDIPERLSGTNEFPLPTVVEVRGEVFFRVADFEDLNAGLVAEGKPPFANPRNSAAGSLRQKNPAVTARRRLRMICHGLGHVESSGGSPFPTLHDAYRALKAWGLPVSDHTAQVTGLDAVTERIAYWGEHRHDVEHEIDGVVVKVDAVALQRRLGATSRAPRWAVAYKYPPEEAQTRLLDIRVNVGRTGRVTPFAYMEPVKVAGSTVGLATLHNASEVKRKGVLIGDTVVIRKAGDVIPEVLGPVVDLRDGSEREFVFPTHCPECGSELAPAKEGDADIRCPNTRSCPAQLRERVFHVAGRGAFDIEGLGYEAATALLQAGVIADEGDLFGLTADDLLRTELFTTKAGELSANGKRLLANLGKAKAQPLWRVLVALSIRHVGPTAARALATEFGSLEAIETASEEQLAGTEGVGPTIAAAVIDWFTVDWHRAIVDKWREAGVRMADERDASIERTLEGLSIVVTGSLAGFSRDEAKEAIIARGGKAAGSVSKKTAYVVAGDAPGSKYDKAIELGVPVLDEDGFRRLLAEGPERDAEDGEPG</sequence>
<gene>
    <name evidence="1" type="primary">ligA</name>
    <name type="ordered locus">Mflv_4248</name>
</gene>
<dbReference type="EC" id="6.5.1.2" evidence="1"/>
<dbReference type="EMBL" id="CP000656">
    <property type="protein sequence ID" value="ABP46717.1"/>
    <property type="molecule type" value="Genomic_DNA"/>
</dbReference>
<dbReference type="SMR" id="A4TDZ8"/>
<dbReference type="STRING" id="350054.Mflv_4248"/>
<dbReference type="KEGG" id="mgi:Mflv_4248"/>
<dbReference type="eggNOG" id="COG0272">
    <property type="taxonomic scope" value="Bacteria"/>
</dbReference>
<dbReference type="HOGENOM" id="CLU_007764_2_0_11"/>
<dbReference type="OrthoDB" id="9759736at2"/>
<dbReference type="GO" id="GO:0005829">
    <property type="term" value="C:cytosol"/>
    <property type="evidence" value="ECO:0007669"/>
    <property type="project" value="TreeGrafter"/>
</dbReference>
<dbReference type="GO" id="GO:0003911">
    <property type="term" value="F:DNA ligase (NAD+) activity"/>
    <property type="evidence" value="ECO:0007669"/>
    <property type="project" value="UniProtKB-UniRule"/>
</dbReference>
<dbReference type="GO" id="GO:0046872">
    <property type="term" value="F:metal ion binding"/>
    <property type="evidence" value="ECO:0007669"/>
    <property type="project" value="UniProtKB-KW"/>
</dbReference>
<dbReference type="GO" id="GO:0006281">
    <property type="term" value="P:DNA repair"/>
    <property type="evidence" value="ECO:0007669"/>
    <property type="project" value="UniProtKB-KW"/>
</dbReference>
<dbReference type="GO" id="GO:0006260">
    <property type="term" value="P:DNA replication"/>
    <property type="evidence" value="ECO:0007669"/>
    <property type="project" value="UniProtKB-KW"/>
</dbReference>
<dbReference type="CDD" id="cd17748">
    <property type="entry name" value="BRCT_DNA_ligase_like"/>
    <property type="match status" value="1"/>
</dbReference>
<dbReference type="CDD" id="cd00114">
    <property type="entry name" value="LIGANc"/>
    <property type="match status" value="1"/>
</dbReference>
<dbReference type="FunFam" id="1.10.150.20:FF:000006">
    <property type="entry name" value="DNA ligase"/>
    <property type="match status" value="1"/>
</dbReference>
<dbReference type="FunFam" id="1.10.287.610:FF:000002">
    <property type="entry name" value="DNA ligase"/>
    <property type="match status" value="1"/>
</dbReference>
<dbReference type="FunFam" id="2.40.50.140:FF:000012">
    <property type="entry name" value="DNA ligase"/>
    <property type="match status" value="1"/>
</dbReference>
<dbReference type="FunFam" id="3.30.470.30:FF:000001">
    <property type="entry name" value="DNA ligase"/>
    <property type="match status" value="1"/>
</dbReference>
<dbReference type="FunFam" id="3.40.50.10190:FF:000054">
    <property type="entry name" value="DNA ligase"/>
    <property type="match status" value="1"/>
</dbReference>
<dbReference type="Gene3D" id="6.20.10.30">
    <property type="match status" value="1"/>
</dbReference>
<dbReference type="Gene3D" id="1.10.150.20">
    <property type="entry name" value="5' to 3' exonuclease, C-terminal subdomain"/>
    <property type="match status" value="2"/>
</dbReference>
<dbReference type="Gene3D" id="3.40.50.10190">
    <property type="entry name" value="BRCT domain"/>
    <property type="match status" value="1"/>
</dbReference>
<dbReference type="Gene3D" id="3.30.470.30">
    <property type="entry name" value="DNA ligase/mRNA capping enzyme"/>
    <property type="match status" value="1"/>
</dbReference>
<dbReference type="Gene3D" id="1.10.287.610">
    <property type="entry name" value="Helix hairpin bin"/>
    <property type="match status" value="1"/>
</dbReference>
<dbReference type="Gene3D" id="2.40.50.140">
    <property type="entry name" value="Nucleic acid-binding proteins"/>
    <property type="match status" value="1"/>
</dbReference>
<dbReference type="HAMAP" id="MF_01588">
    <property type="entry name" value="DNA_ligase_A"/>
    <property type="match status" value="1"/>
</dbReference>
<dbReference type="InterPro" id="IPR001357">
    <property type="entry name" value="BRCT_dom"/>
</dbReference>
<dbReference type="InterPro" id="IPR036420">
    <property type="entry name" value="BRCT_dom_sf"/>
</dbReference>
<dbReference type="InterPro" id="IPR041663">
    <property type="entry name" value="DisA/LigA_HHH"/>
</dbReference>
<dbReference type="InterPro" id="IPR001679">
    <property type="entry name" value="DNA_ligase"/>
</dbReference>
<dbReference type="InterPro" id="IPR018239">
    <property type="entry name" value="DNA_ligase_AS"/>
</dbReference>
<dbReference type="InterPro" id="IPR033136">
    <property type="entry name" value="DNA_ligase_CS"/>
</dbReference>
<dbReference type="InterPro" id="IPR013839">
    <property type="entry name" value="DNAligase_adenylation"/>
</dbReference>
<dbReference type="InterPro" id="IPR013840">
    <property type="entry name" value="DNAligase_N"/>
</dbReference>
<dbReference type="InterPro" id="IPR012340">
    <property type="entry name" value="NA-bd_OB-fold"/>
</dbReference>
<dbReference type="InterPro" id="IPR004150">
    <property type="entry name" value="NAD_DNA_ligase_OB"/>
</dbReference>
<dbReference type="InterPro" id="IPR010994">
    <property type="entry name" value="RuvA_2-like"/>
</dbReference>
<dbReference type="InterPro" id="IPR004149">
    <property type="entry name" value="Znf_DNAligase_C4"/>
</dbReference>
<dbReference type="NCBIfam" id="TIGR00575">
    <property type="entry name" value="dnlj"/>
    <property type="match status" value="1"/>
</dbReference>
<dbReference type="NCBIfam" id="NF005932">
    <property type="entry name" value="PRK07956.1"/>
    <property type="match status" value="1"/>
</dbReference>
<dbReference type="PANTHER" id="PTHR23389">
    <property type="entry name" value="CHROMOSOME TRANSMISSION FIDELITY FACTOR 18"/>
    <property type="match status" value="1"/>
</dbReference>
<dbReference type="PANTHER" id="PTHR23389:SF9">
    <property type="entry name" value="DNA LIGASE"/>
    <property type="match status" value="1"/>
</dbReference>
<dbReference type="Pfam" id="PF00533">
    <property type="entry name" value="BRCT"/>
    <property type="match status" value="1"/>
</dbReference>
<dbReference type="Pfam" id="PF01653">
    <property type="entry name" value="DNA_ligase_aden"/>
    <property type="match status" value="1"/>
</dbReference>
<dbReference type="Pfam" id="PF03120">
    <property type="entry name" value="DNA_ligase_OB"/>
    <property type="match status" value="1"/>
</dbReference>
<dbReference type="Pfam" id="PF03119">
    <property type="entry name" value="DNA_ligase_ZBD"/>
    <property type="match status" value="1"/>
</dbReference>
<dbReference type="Pfam" id="PF12826">
    <property type="entry name" value="HHH_2"/>
    <property type="match status" value="1"/>
</dbReference>
<dbReference type="Pfam" id="PF22745">
    <property type="entry name" value="Nlig-Ia"/>
    <property type="match status" value="1"/>
</dbReference>
<dbReference type="PIRSF" id="PIRSF001604">
    <property type="entry name" value="LigA"/>
    <property type="match status" value="1"/>
</dbReference>
<dbReference type="SMART" id="SM00292">
    <property type="entry name" value="BRCT"/>
    <property type="match status" value="1"/>
</dbReference>
<dbReference type="SMART" id="SM00532">
    <property type="entry name" value="LIGANc"/>
    <property type="match status" value="1"/>
</dbReference>
<dbReference type="SUPFAM" id="SSF52113">
    <property type="entry name" value="BRCT domain"/>
    <property type="match status" value="1"/>
</dbReference>
<dbReference type="SUPFAM" id="SSF56091">
    <property type="entry name" value="DNA ligase/mRNA capping enzyme, catalytic domain"/>
    <property type="match status" value="1"/>
</dbReference>
<dbReference type="SUPFAM" id="SSF50249">
    <property type="entry name" value="Nucleic acid-binding proteins"/>
    <property type="match status" value="1"/>
</dbReference>
<dbReference type="SUPFAM" id="SSF47781">
    <property type="entry name" value="RuvA domain 2-like"/>
    <property type="match status" value="1"/>
</dbReference>
<dbReference type="PROSITE" id="PS50172">
    <property type="entry name" value="BRCT"/>
    <property type="match status" value="1"/>
</dbReference>
<dbReference type="PROSITE" id="PS01055">
    <property type="entry name" value="DNA_LIGASE_N1"/>
    <property type="match status" value="1"/>
</dbReference>
<dbReference type="PROSITE" id="PS01056">
    <property type="entry name" value="DNA_LIGASE_N2"/>
    <property type="match status" value="1"/>
</dbReference>
<organism>
    <name type="scientific">Mycolicibacterium gilvum (strain PYR-GCK)</name>
    <name type="common">Mycobacterium gilvum (strain PYR-GCK)</name>
    <dbReference type="NCBI Taxonomy" id="350054"/>
    <lineage>
        <taxon>Bacteria</taxon>
        <taxon>Bacillati</taxon>
        <taxon>Actinomycetota</taxon>
        <taxon>Actinomycetes</taxon>
        <taxon>Mycobacteriales</taxon>
        <taxon>Mycobacteriaceae</taxon>
        <taxon>Mycolicibacterium</taxon>
    </lineage>
</organism>
<name>DNLJ_MYCGI</name>
<keyword id="KW-0227">DNA damage</keyword>
<keyword id="KW-0234">DNA repair</keyword>
<keyword id="KW-0235">DNA replication</keyword>
<keyword id="KW-0436">Ligase</keyword>
<keyword id="KW-0460">Magnesium</keyword>
<keyword id="KW-0464">Manganese</keyword>
<keyword id="KW-0479">Metal-binding</keyword>
<keyword id="KW-0520">NAD</keyword>
<keyword id="KW-0862">Zinc</keyword>
<comment type="function">
    <text evidence="1">DNA ligase that catalyzes the formation of phosphodiester linkages between 5'-phosphoryl and 3'-hydroxyl groups in double-stranded DNA using NAD as a coenzyme and as the energy source for the reaction. It is essential for DNA replication and repair of damaged DNA.</text>
</comment>
<comment type="catalytic activity">
    <reaction evidence="1">
        <text>NAD(+) + (deoxyribonucleotide)n-3'-hydroxyl + 5'-phospho-(deoxyribonucleotide)m = (deoxyribonucleotide)n+m + AMP + beta-nicotinamide D-nucleotide.</text>
        <dbReference type="EC" id="6.5.1.2"/>
    </reaction>
</comment>
<comment type="cofactor">
    <cofactor evidence="1">
        <name>Mg(2+)</name>
        <dbReference type="ChEBI" id="CHEBI:18420"/>
    </cofactor>
    <cofactor evidence="1">
        <name>Mn(2+)</name>
        <dbReference type="ChEBI" id="CHEBI:29035"/>
    </cofactor>
</comment>
<comment type="similarity">
    <text evidence="1">Belongs to the NAD-dependent DNA ligase family. LigA subfamily.</text>
</comment>